<organism>
    <name type="scientific">Haemophilus influenzae (strain ATCC 51907 / DSM 11121 / KW20 / Rd)</name>
    <dbReference type="NCBI Taxonomy" id="71421"/>
    <lineage>
        <taxon>Bacteria</taxon>
        <taxon>Pseudomonadati</taxon>
        <taxon>Pseudomonadota</taxon>
        <taxon>Gammaproteobacteria</taxon>
        <taxon>Pasteurellales</taxon>
        <taxon>Pasteurellaceae</taxon>
        <taxon>Haemophilus</taxon>
    </lineage>
</organism>
<gene>
    <name type="primary">sdhE</name>
    <name type="ordered locus">HI_0627</name>
</gene>
<comment type="function">
    <text evidence="1">An FAD assembly protein, which accelerates covalent attachment of the cofactor into other proteins. Plays an essential role in the assembly of succinate dehydrogenase (SDH, respiratory complex II), an enzyme complex that is a component of both the tricarboxylic acid cycle and the electron transport chain, and which couples the oxidation of succinate to fumarate with the reduction of ubiquinone (coenzyme Q) to ubiquinol. Required for flavinylation (covalent attachment of FAD) of the flavoprotein subunit SdhA of SDH and other flavinylated proteins as well.</text>
</comment>
<comment type="subcellular location">
    <subcellularLocation>
        <location evidence="1">Cytoplasm</location>
    </subcellularLocation>
</comment>
<comment type="similarity">
    <text evidence="2">Belongs to the SdhE FAD assembly factor family.</text>
</comment>
<reference key="1">
    <citation type="journal article" date="1995" name="Science">
        <title>Whole-genome random sequencing and assembly of Haemophilus influenzae Rd.</title>
        <authorList>
            <person name="Fleischmann R.D."/>
            <person name="Adams M.D."/>
            <person name="White O."/>
            <person name="Clayton R.A."/>
            <person name="Kirkness E.F."/>
            <person name="Kerlavage A.R."/>
            <person name="Bult C.J."/>
            <person name="Tomb J.-F."/>
            <person name="Dougherty B.A."/>
            <person name="Merrick J.M."/>
            <person name="McKenney K."/>
            <person name="Sutton G.G."/>
            <person name="FitzHugh W."/>
            <person name="Fields C.A."/>
            <person name="Gocayne J.D."/>
            <person name="Scott J.D."/>
            <person name="Shirley R."/>
            <person name="Liu L.-I."/>
            <person name="Glodek A."/>
            <person name="Kelley J.M."/>
            <person name="Weidman J.F."/>
            <person name="Phillips C.A."/>
            <person name="Spriggs T."/>
            <person name="Hedblom E."/>
            <person name="Cotton M.D."/>
            <person name="Utterback T.R."/>
            <person name="Hanna M.C."/>
            <person name="Nguyen D.T."/>
            <person name="Saudek D.M."/>
            <person name="Brandon R.C."/>
            <person name="Fine L.D."/>
            <person name="Fritchman J.L."/>
            <person name="Fuhrmann J.L."/>
            <person name="Geoghagen N.S.M."/>
            <person name="Gnehm C.L."/>
            <person name="McDonald L.A."/>
            <person name="Small K.V."/>
            <person name="Fraser C.M."/>
            <person name="Smith H.O."/>
            <person name="Venter J.C."/>
        </authorList>
    </citation>
    <scope>NUCLEOTIDE SEQUENCE [LARGE SCALE GENOMIC DNA]</scope>
    <source>
        <strain>ATCC 51907 / DSM 11121 / KW20 / Rd</strain>
    </source>
</reference>
<evidence type="ECO:0000250" key="1">
    <source>
        <dbReference type="UniProtKB" id="G4V4G2"/>
    </source>
</evidence>
<evidence type="ECO:0000305" key="2"/>
<sequence length="85" mass="10430">MKKYNKLRIEWDCRRGMLELDKIIMPFYLTHFHELTDDKKDIFIRLLASTDLQLFSWFFNLAKSQDVELQMMVEYIQKVQKIIIN</sequence>
<keyword id="KW-0143">Chaperone</keyword>
<keyword id="KW-0963">Cytoplasm</keyword>
<keyword id="KW-1185">Reference proteome</keyword>
<protein>
    <recommendedName>
        <fullName>FAD assembly factor SdhE</fullName>
    </recommendedName>
</protein>
<accession>P44025</accession>
<name>SDHE_HAEIN</name>
<dbReference type="EMBL" id="L42023">
    <property type="protein sequence ID" value="AAC22287.1"/>
    <property type="molecule type" value="Genomic_DNA"/>
</dbReference>
<dbReference type="PIR" id="G64010">
    <property type="entry name" value="G64010"/>
</dbReference>
<dbReference type="RefSeq" id="NP_438787.1">
    <property type="nucleotide sequence ID" value="NC_000907.1"/>
</dbReference>
<dbReference type="SMR" id="P44025"/>
<dbReference type="STRING" id="71421.HI_0627"/>
<dbReference type="EnsemblBacteria" id="AAC22287">
    <property type="protein sequence ID" value="AAC22287"/>
    <property type="gene ID" value="HI_0627"/>
</dbReference>
<dbReference type="KEGG" id="hin:HI_0627"/>
<dbReference type="PATRIC" id="fig|71421.8.peg.653"/>
<dbReference type="eggNOG" id="COG2938">
    <property type="taxonomic scope" value="Bacteria"/>
</dbReference>
<dbReference type="HOGENOM" id="CLU_103054_2_2_6"/>
<dbReference type="OrthoDB" id="9180899at2"/>
<dbReference type="PhylomeDB" id="P44025"/>
<dbReference type="BioCyc" id="HINF71421:G1GJ1-654-MONOMER"/>
<dbReference type="Proteomes" id="UP000000579">
    <property type="component" value="Chromosome"/>
</dbReference>
<dbReference type="GO" id="GO:0005737">
    <property type="term" value="C:cytoplasm"/>
    <property type="evidence" value="ECO:0007669"/>
    <property type="project" value="UniProtKB-SubCell"/>
</dbReference>
<dbReference type="GO" id="GO:0006105">
    <property type="term" value="P:succinate metabolic process"/>
    <property type="evidence" value="ECO:0000318"/>
    <property type="project" value="GO_Central"/>
</dbReference>
<dbReference type="FunFam" id="1.10.150.250:FF:000001">
    <property type="entry name" value="FAD assembly factor SdhE"/>
    <property type="match status" value="1"/>
</dbReference>
<dbReference type="Gene3D" id="1.10.150.250">
    <property type="entry name" value="Flavinator of succinate dehydrogenase"/>
    <property type="match status" value="1"/>
</dbReference>
<dbReference type="InterPro" id="IPR005631">
    <property type="entry name" value="SDH"/>
</dbReference>
<dbReference type="InterPro" id="IPR036714">
    <property type="entry name" value="SDH_sf"/>
</dbReference>
<dbReference type="InterPro" id="IPR050531">
    <property type="entry name" value="SdhE_FAD_assembly_factor"/>
</dbReference>
<dbReference type="PANTHER" id="PTHR39585">
    <property type="entry name" value="FAD ASSEMBLY FACTOR SDHE"/>
    <property type="match status" value="1"/>
</dbReference>
<dbReference type="PANTHER" id="PTHR39585:SF1">
    <property type="entry name" value="FAD ASSEMBLY FACTOR SDHE"/>
    <property type="match status" value="1"/>
</dbReference>
<dbReference type="Pfam" id="PF03937">
    <property type="entry name" value="Sdh5"/>
    <property type="match status" value="1"/>
</dbReference>
<dbReference type="SUPFAM" id="SSF109910">
    <property type="entry name" value="YgfY-like"/>
    <property type="match status" value="1"/>
</dbReference>
<feature type="chain" id="PRO_0000214400" description="FAD assembly factor SdhE">
    <location>
        <begin position="1"/>
        <end position="85"/>
    </location>
</feature>
<proteinExistence type="inferred from homology"/>